<protein>
    <recommendedName>
        <fullName>Homeobox protein ceh-12</fullName>
    </recommendedName>
</protein>
<accession>P17487</accession>
<accession>Q9TZZ7</accession>
<gene>
    <name type="primary">ceh-12</name>
    <name type="ORF">F33D11.4</name>
</gene>
<organism>
    <name type="scientific">Caenorhabditis elegans</name>
    <dbReference type="NCBI Taxonomy" id="6239"/>
    <lineage>
        <taxon>Eukaryota</taxon>
        <taxon>Metazoa</taxon>
        <taxon>Ecdysozoa</taxon>
        <taxon>Nematoda</taxon>
        <taxon>Chromadorea</taxon>
        <taxon>Rhabditida</taxon>
        <taxon>Rhabditina</taxon>
        <taxon>Rhabditomorpha</taxon>
        <taxon>Rhabditoidea</taxon>
        <taxon>Rhabditidae</taxon>
        <taxon>Peloderinae</taxon>
        <taxon>Caenorhabditis</taxon>
    </lineage>
</organism>
<proteinExistence type="evidence at transcript level"/>
<sequence>MMFSSIDSLLKISTSSQNEDQKLESHPSPPSQIPNYSTSCSEELMKMAAKAAQFAAQASLENSFSSSTSPTSTVTPLSAYTSLVQPVLPLIYDHLALTYSVNAWQAWGKMRRPRTAFSSEQLVQLEKQFSDNRYLSRPRRYQLAQQLSLSETQIKIWFQNRRMKNKRCPSSTPIQSTSSS</sequence>
<reference key="1">
    <citation type="journal article" date="1998" name="Science">
        <title>Genome sequence of the nematode C. elegans: a platform for investigating biology.</title>
        <authorList>
            <consortium name="The C. elegans sequencing consortium"/>
        </authorList>
    </citation>
    <scope>NUCLEOTIDE SEQUENCE [LARGE SCALE GENOMIC DNA]</scope>
    <source>
        <strain>Bristol N2</strain>
    </source>
</reference>
<reference key="2">
    <citation type="journal article" date="1990" name="Nucleic Acids Res.">
        <title>Cloning and analysis of three new homeobox genes from the nematode Caenorhabditis elegans.</title>
        <authorList>
            <person name="Schaller D."/>
            <person name="Wittmann C."/>
            <person name="Spicher A."/>
            <person name="Mueller F."/>
            <person name="Tobler H."/>
        </authorList>
    </citation>
    <scope>NUCLEOTIDE SEQUENCE [GENOMIC DNA] OF 154-180</scope>
</reference>
<reference key="3">
    <citation type="journal article" date="2007" name="Genes Dev.">
        <title>UNC-4 represses CEH-12/HB9 to specify synaptic inputs to VA motor neurons in C. elegans.</title>
        <authorList>
            <person name="Von Stetina S.E."/>
            <person name="Fox R.M."/>
            <person name="Watkins K.L."/>
            <person name="Starich T.A."/>
            <person name="Shaw J.E."/>
            <person name="Miller D.M. III"/>
        </authorList>
    </citation>
    <scope>FUNCTION</scope>
    <scope>TISSUE SPECIFICITY</scope>
    <scope>DISRUPTION PHENOTYPE</scope>
</reference>
<reference key="4">
    <citation type="journal article" date="2012" name="Development">
        <title>UNC-4 antagonizes Wnt signaling to regulate synaptic choice in the C. elegans motor circuit.</title>
        <authorList>
            <person name="Schneider J."/>
            <person name="Skelton R.L."/>
            <person name="Von Stetina S.E."/>
            <person name="Middelkoop T.C."/>
            <person name="van Oudenaarden A."/>
            <person name="Korswagen H.C."/>
            <person name="Miller D.M. III"/>
        </authorList>
    </citation>
    <scope>FUNCTION</scope>
    <scope>DISRUPTION PHENOTYPE</scope>
</reference>
<reference key="5">
    <citation type="journal article" date="2021" name="Elife">
        <title>Sustained expression of unc-4 homeobox gene and unc-37/Groucho in postmitotic neurons specifies the spatial organization of the cholinergic synapses in C. elegans.</title>
        <authorList>
            <person name="Kurashina M."/>
            <person name="Wang J."/>
            <person name="Lin J."/>
            <person name="Lee K.K."/>
            <person name="Johal A."/>
            <person name="Mizumoto K."/>
        </authorList>
    </citation>
    <scope>FUNCTION</scope>
</reference>
<evidence type="ECO:0000255" key="1">
    <source>
        <dbReference type="PROSITE-ProRule" id="PRU00108"/>
    </source>
</evidence>
<evidence type="ECO:0000256" key="2">
    <source>
        <dbReference type="SAM" id="MobiDB-lite"/>
    </source>
</evidence>
<evidence type="ECO:0000269" key="3">
    <source>
    </source>
</evidence>
<evidence type="ECO:0000269" key="4">
    <source>
    </source>
</evidence>
<evidence type="ECO:0000269" key="5">
    <source>
    </source>
</evidence>
<evidence type="ECO:0000303" key="6">
    <source>
    </source>
</evidence>
<dbReference type="EMBL" id="X17076">
    <property type="protein sequence ID" value="CAA34928.1"/>
    <property type="molecule type" value="Genomic_DNA"/>
</dbReference>
<dbReference type="PIR" id="S09504">
    <property type="entry name" value="S09504"/>
</dbReference>
<dbReference type="PIR" id="T32764">
    <property type="entry name" value="T32764"/>
</dbReference>
<dbReference type="RefSeq" id="NP_491693.1">
    <property type="nucleotide sequence ID" value="NM_059292.2"/>
</dbReference>
<dbReference type="SMR" id="P17487"/>
<dbReference type="BioGRID" id="37709">
    <property type="interactions" value="3"/>
</dbReference>
<dbReference type="FunCoup" id="P17487">
    <property type="interactions" value="173"/>
</dbReference>
<dbReference type="IntAct" id="P17487">
    <property type="interactions" value="3"/>
</dbReference>
<dbReference type="STRING" id="6239.F33D11.4a.1"/>
<dbReference type="PaxDb" id="6239-F33D11.4"/>
<dbReference type="EnsemblMetazoa" id="F33D11.4a.1">
    <property type="protein sequence ID" value="F33D11.4a.1"/>
    <property type="gene ID" value="WBGene00000436"/>
</dbReference>
<dbReference type="GeneID" id="172255"/>
<dbReference type="KEGG" id="cel:CELE_F33D11.4"/>
<dbReference type="UCSC" id="F33D11.4">
    <property type="organism name" value="c. elegans"/>
</dbReference>
<dbReference type="CTD" id="172255"/>
<dbReference type="WormBase" id="F33D11.4a">
    <property type="protein sequence ID" value="CE09894"/>
    <property type="gene ID" value="WBGene00000436"/>
    <property type="gene designation" value="ceh-12"/>
</dbReference>
<dbReference type="eggNOG" id="KOG0489">
    <property type="taxonomic scope" value="Eukaryota"/>
</dbReference>
<dbReference type="GeneTree" id="ENSGT00940000164719"/>
<dbReference type="HOGENOM" id="CLU_126728_0_0_1"/>
<dbReference type="InParanoid" id="P17487"/>
<dbReference type="OrthoDB" id="6159439at2759"/>
<dbReference type="PRO" id="PR:P17487"/>
<dbReference type="Bgee" id="WBGene00000436">
    <property type="expression patterns" value="Expressed in larva and 2 other cell types or tissues"/>
</dbReference>
<dbReference type="ExpressionAtlas" id="P17487">
    <property type="expression patterns" value="baseline"/>
</dbReference>
<dbReference type="GO" id="GO:0005634">
    <property type="term" value="C:nucleus"/>
    <property type="evidence" value="ECO:0007669"/>
    <property type="project" value="UniProtKB-SubCell"/>
</dbReference>
<dbReference type="GO" id="GO:0003677">
    <property type="term" value="F:DNA binding"/>
    <property type="evidence" value="ECO:0007669"/>
    <property type="project" value="UniProtKB-KW"/>
</dbReference>
<dbReference type="GO" id="GO:0000981">
    <property type="term" value="F:DNA-binding transcription factor activity, RNA polymerase II-specific"/>
    <property type="evidence" value="ECO:0007669"/>
    <property type="project" value="InterPro"/>
</dbReference>
<dbReference type="GO" id="GO:0010629">
    <property type="term" value="P:negative regulation of gene expression"/>
    <property type="evidence" value="ECO:0000315"/>
    <property type="project" value="UniProtKB"/>
</dbReference>
<dbReference type="GO" id="GO:0048665">
    <property type="term" value="P:neuron fate specification"/>
    <property type="evidence" value="ECO:0000315"/>
    <property type="project" value="UniProtKB"/>
</dbReference>
<dbReference type="CDD" id="cd00086">
    <property type="entry name" value="homeodomain"/>
    <property type="match status" value="1"/>
</dbReference>
<dbReference type="FunFam" id="1.10.10.60:FF:000417">
    <property type="entry name" value="Even-skipped homeobox 1"/>
    <property type="match status" value="1"/>
</dbReference>
<dbReference type="Gene3D" id="1.10.10.60">
    <property type="entry name" value="Homeodomain-like"/>
    <property type="match status" value="1"/>
</dbReference>
<dbReference type="InterPro" id="IPR001356">
    <property type="entry name" value="HD"/>
</dbReference>
<dbReference type="InterPro" id="IPR020479">
    <property type="entry name" value="HD_metazoa"/>
</dbReference>
<dbReference type="InterPro" id="IPR017970">
    <property type="entry name" value="Homeobox_CS"/>
</dbReference>
<dbReference type="InterPro" id="IPR009057">
    <property type="entry name" value="Homeodomain-like_sf"/>
</dbReference>
<dbReference type="InterPro" id="IPR042768">
    <property type="entry name" value="MNX1/Ceh-12"/>
</dbReference>
<dbReference type="PANTHER" id="PTHR24335:SF4">
    <property type="entry name" value="EXTRA-EXTRA"/>
    <property type="match status" value="1"/>
</dbReference>
<dbReference type="PANTHER" id="PTHR24335">
    <property type="entry name" value="MOTOR NEURON AND PANCREAS HOMEOBOX PROTEIN"/>
    <property type="match status" value="1"/>
</dbReference>
<dbReference type="Pfam" id="PF00046">
    <property type="entry name" value="Homeodomain"/>
    <property type="match status" value="1"/>
</dbReference>
<dbReference type="PRINTS" id="PR00024">
    <property type="entry name" value="HOMEOBOX"/>
</dbReference>
<dbReference type="SMART" id="SM00389">
    <property type="entry name" value="HOX"/>
    <property type="match status" value="1"/>
</dbReference>
<dbReference type="SUPFAM" id="SSF46689">
    <property type="entry name" value="Homeodomain-like"/>
    <property type="match status" value="1"/>
</dbReference>
<dbReference type="PROSITE" id="PS00027">
    <property type="entry name" value="HOMEOBOX_1"/>
    <property type="match status" value="1"/>
</dbReference>
<dbReference type="PROSITE" id="PS50071">
    <property type="entry name" value="HOMEOBOX_2"/>
    <property type="match status" value="1"/>
</dbReference>
<name>HM12_CAEEL</name>
<feature type="chain" id="PRO_0000048987" description="Homeobox protein ceh-12">
    <location>
        <begin position="1"/>
        <end position="180"/>
    </location>
</feature>
<feature type="DNA-binding region" description="Homeobox" evidence="1">
    <location>
        <begin position="110"/>
        <end position="169"/>
    </location>
</feature>
<feature type="region of interest" description="Disordered" evidence="2">
    <location>
        <begin position="15"/>
        <end position="37"/>
    </location>
</feature>
<keyword id="KW-0217">Developmental protein</keyword>
<keyword id="KW-0238">DNA-binding</keyword>
<keyword id="KW-0371">Homeobox</keyword>
<keyword id="KW-0539">Nucleus</keyword>
<comment type="function">
    <text evidence="3 4 5 6">Transcription factor (PubMed:17289921). Plays a role, downstream from homeobox protein unc-4 and Wnt signaling, in specifying synaptic inputs to A-class motor neurons (PubMed:17289921, PubMed:22619391). Involved in patterning of the synaptic outputs of the postmitotic DA class cholinergic motor neurons (PubMed:34388088).</text>
</comment>
<comment type="subcellular location">
    <subcellularLocation>
        <location evidence="1">Nucleus</location>
    </subcellularLocation>
</comment>
<comment type="tissue specificity">
    <text evidence="3">Expressed in VB motor neurons in the ventral nerve cord.</text>
</comment>
<comment type="disruption phenotype">
    <text evidence="3 4">Causes abnormal ectopic expression of homeobox protein vab-7 in VB motor neurons (PubMed:17289921). Suppresses the inability to move backward in an unc-4 mutant background (PubMed:17289921, PubMed:22619391). In an unc-4 mutant background, expression of innexin unc-7 in puncta adjacent to VA motor neurons is significantly reduced for posterior neurons, probably as a result of miswiring of gap junctions (PubMed:17289921).</text>
</comment>